<evidence type="ECO:0000250" key="1"/>
<evidence type="ECO:0000255" key="2"/>
<evidence type="ECO:0000269" key="3">
    <source>
    </source>
</evidence>
<evidence type="ECO:0000269" key="4">
    <source>
    </source>
</evidence>
<evidence type="ECO:0000305" key="5"/>
<feature type="signal peptide" evidence="2">
    <location>
        <begin position="1"/>
        <end position="26"/>
    </location>
</feature>
<feature type="chain" id="PRO_0000394668" description="Defensin-like protein A">
    <location>
        <begin position="27"/>
        <end position="86"/>
    </location>
</feature>
<feature type="disulfide bond" evidence="1">
    <location>
        <begin position="32"/>
        <end position="84"/>
    </location>
</feature>
<feature type="disulfide bond" evidence="1">
    <location>
        <begin position="42"/>
        <end position="70"/>
    </location>
</feature>
<feature type="disulfide bond" evidence="1">
    <location>
        <begin position="52"/>
        <end position="79"/>
    </location>
</feature>
<feature type="disulfide bond" evidence="1">
    <location>
        <begin position="68"/>
        <end position="81"/>
    </location>
</feature>
<feature type="sequence conflict" description="In Ref. 2; ABF71367." evidence="5" ref="2">
    <original>W</original>
    <variation>S</variation>
    <location>
        <position position="29"/>
    </location>
</feature>
<accession>Q19MC2</accession>
<reference key="1">
    <citation type="journal article" date="2010" name="Nature">
        <title>Evolution of self-compatibility in Arabidopsis by a mutation in the male specificity gene.</title>
        <authorList>
            <person name="Tsuchimatsu T."/>
            <person name="Suwabe K."/>
            <person name="Shimizu-Inatsugi R."/>
            <person name="Isokawa S."/>
            <person name="Pavlidis P."/>
            <person name="Stadler T."/>
            <person name="Suzuki G."/>
            <person name="Takayama S."/>
            <person name="Watanabe M."/>
            <person name="Shimizu K.K."/>
        </authorList>
    </citation>
    <scope>NUCLEOTIDE SEQUENCE [GENOMIC DNA / MRNA]</scope>
    <scope>FUNCTION</scope>
</reference>
<reference key="2">
    <citation type="journal article" date="2006" name="Mol. Biol. Evol.">
        <title>The transition to self-compatibility in Arabidopsis thaliana and evolution within S-haplotypes over 10 Myr.</title>
        <authorList>
            <person name="Bechsgaard J.S."/>
            <person name="Castric V."/>
            <person name="Charlesworth D."/>
            <person name="Vekemans X."/>
            <person name="Schierup M.H."/>
        </authorList>
    </citation>
    <scope>NUCLEOTIDE SEQUENCE [GENOMIC DNA] OF 24-42</scope>
    <scope>FUNCTION</scope>
</reference>
<proteinExistence type="inferred from homology"/>
<keyword id="KW-1015">Disulfide bond</keyword>
<keyword id="KW-0964">Secreted</keyword>
<keyword id="KW-0713">Self-incompatibility</keyword>
<keyword id="KW-0732">Signal</keyword>
<gene>
    <name type="primary">SCRA</name>
    <name type="synonym">SCR04</name>
</gene>
<comment type="function">
    <text evidence="3 4">Involved in male-mediated self-incompatibility.</text>
</comment>
<comment type="subcellular location">
    <subcellularLocation>
        <location evidence="1">Secreted</location>
    </subcellularLocation>
</comment>
<comment type="similarity">
    <text evidence="5">Belongs to the DEFL family.</text>
</comment>
<protein>
    <recommendedName>
        <fullName>Defensin-like protein A</fullName>
        <shortName>AhSCRA</shortName>
    </recommendedName>
    <alternativeName>
        <fullName>S locus cysteine-rich-like protein SCR04</fullName>
        <shortName>AhSCR04</shortName>
    </alternativeName>
</protein>
<name>SCRA_ARAHG</name>
<dbReference type="EMBL" id="DQ520277">
    <property type="protein sequence ID" value="ABF71367.1"/>
    <property type="molecule type" value="Genomic_DNA"/>
</dbReference>
<dbReference type="SMR" id="Q19MC2"/>
<dbReference type="GO" id="GO:0005576">
    <property type="term" value="C:extracellular region"/>
    <property type="evidence" value="ECO:0007669"/>
    <property type="project" value="UniProtKB-SubCell"/>
</dbReference>
<dbReference type="GO" id="GO:0060320">
    <property type="term" value="P:rejection of self pollen"/>
    <property type="evidence" value="ECO:0000315"/>
    <property type="project" value="UniProtKB"/>
</dbReference>
<dbReference type="GO" id="GO:0007165">
    <property type="term" value="P:signal transduction"/>
    <property type="evidence" value="ECO:0007669"/>
    <property type="project" value="InterPro"/>
</dbReference>
<dbReference type="InterPro" id="IPR010682">
    <property type="entry name" value="SCRL"/>
</dbReference>
<dbReference type="PANTHER" id="PTHR34450:SF4">
    <property type="entry name" value="DEFENSIN-LIKE PROTEIN 226-RELATED"/>
    <property type="match status" value="1"/>
</dbReference>
<dbReference type="PANTHER" id="PTHR34450">
    <property type="entry name" value="DEFENSIN-LIKE PROTEIN 245-RELATED"/>
    <property type="match status" value="1"/>
</dbReference>
<dbReference type="Pfam" id="PF06876">
    <property type="entry name" value="SCRL"/>
    <property type="match status" value="1"/>
</dbReference>
<dbReference type="PROSITE" id="PS00022">
    <property type="entry name" value="EGF_1"/>
    <property type="match status" value="1"/>
</dbReference>
<sequence>MRCVVLFMVSCLLIVLLINHFEEVEAQKWKECNLRDIFPGKCEHDANAKLRCKEDIAKNFRPSRPFECDCQTFDQGRICYCKKCLV</sequence>
<organism>
    <name type="scientific">Arabidopsis halleri subsp. gemmifera</name>
    <name type="common">Arabis gemmifera</name>
    <dbReference type="NCBI Taxonomy" id="63677"/>
    <lineage>
        <taxon>Eukaryota</taxon>
        <taxon>Viridiplantae</taxon>
        <taxon>Streptophyta</taxon>
        <taxon>Embryophyta</taxon>
        <taxon>Tracheophyta</taxon>
        <taxon>Spermatophyta</taxon>
        <taxon>Magnoliopsida</taxon>
        <taxon>eudicotyledons</taxon>
        <taxon>Gunneridae</taxon>
        <taxon>Pentapetalae</taxon>
        <taxon>rosids</taxon>
        <taxon>malvids</taxon>
        <taxon>Brassicales</taxon>
        <taxon>Brassicaceae</taxon>
        <taxon>Camelineae</taxon>
        <taxon>Arabidopsis</taxon>
    </lineage>
</organism>